<gene>
    <name type="primary">Marchf6</name>
    <name type="synonym">Kiaa0597</name>
    <name type="synonym">March6</name>
</gene>
<dbReference type="EC" id="2.3.2.27" evidence="1"/>
<dbReference type="EMBL" id="AK042980">
    <property type="protein sequence ID" value="BAC31427.1"/>
    <property type="molecule type" value="mRNA"/>
</dbReference>
<dbReference type="EMBL" id="AK089827">
    <property type="protein sequence ID" value="BAC40971.1"/>
    <property type="molecule type" value="mRNA"/>
</dbReference>
<dbReference type="EMBL" id="AK129169">
    <property type="protein sequence ID" value="BAC97979.1"/>
    <property type="molecule type" value="Transcribed_RNA"/>
</dbReference>
<dbReference type="EMBL" id="BC037454">
    <property type="protein sequence ID" value="AAH37454.1"/>
    <property type="status" value="ALT_INIT"/>
    <property type="molecule type" value="mRNA"/>
</dbReference>
<dbReference type="EMBL" id="BC048816">
    <property type="protein sequence ID" value="AAH48816.1"/>
    <property type="molecule type" value="mRNA"/>
</dbReference>
<dbReference type="EMBL" id="BC059190">
    <property type="protein sequence ID" value="AAH59190.2"/>
    <property type="molecule type" value="mRNA"/>
</dbReference>
<dbReference type="CCDS" id="CCDS37054.1">
    <molecule id="Q6ZQ89-1"/>
</dbReference>
<dbReference type="RefSeq" id="NP_766194.2">
    <molecule id="Q6ZQ89-1"/>
    <property type="nucleotide sequence ID" value="NM_172606.3"/>
</dbReference>
<dbReference type="SMR" id="Q6ZQ89"/>
<dbReference type="BioGRID" id="230150">
    <property type="interactions" value="1"/>
</dbReference>
<dbReference type="FunCoup" id="Q6ZQ89">
    <property type="interactions" value="3887"/>
</dbReference>
<dbReference type="STRING" id="10090.ENSMUSP00000087694"/>
<dbReference type="iPTMnet" id="Q6ZQ89"/>
<dbReference type="PhosphoSitePlus" id="Q6ZQ89"/>
<dbReference type="PaxDb" id="10090-ENSMUSP00000087694"/>
<dbReference type="PeptideAtlas" id="Q6ZQ89"/>
<dbReference type="ProteomicsDB" id="295825">
    <molecule id="Q6ZQ89-1"/>
</dbReference>
<dbReference type="ProteomicsDB" id="295826">
    <molecule id="Q6ZQ89-2"/>
</dbReference>
<dbReference type="ProteomicsDB" id="295827">
    <molecule id="Q6ZQ89-3"/>
</dbReference>
<dbReference type="Antibodypedia" id="22463">
    <property type="antibodies" value="156 antibodies from 29 providers"/>
</dbReference>
<dbReference type="DNASU" id="223455"/>
<dbReference type="Ensembl" id="ENSMUST00000090227.6">
    <molecule id="Q6ZQ89-1"/>
    <property type="protein sequence ID" value="ENSMUSP00000087694.5"/>
    <property type="gene ID" value="ENSMUSG00000039100.11"/>
</dbReference>
<dbReference type="GeneID" id="223455"/>
<dbReference type="KEGG" id="mmu:223455"/>
<dbReference type="UCSC" id="uc007vkh.1">
    <molecule id="Q6ZQ89-1"/>
    <property type="organism name" value="mouse"/>
</dbReference>
<dbReference type="AGR" id="MGI:2442773"/>
<dbReference type="CTD" id="10299"/>
<dbReference type="MGI" id="MGI:2442773">
    <property type="gene designation" value="Marchf6"/>
</dbReference>
<dbReference type="VEuPathDB" id="HostDB:ENSMUSG00000039100"/>
<dbReference type="eggNOG" id="KOG1609">
    <property type="taxonomic scope" value="Eukaryota"/>
</dbReference>
<dbReference type="GeneTree" id="ENSGT00940000155171"/>
<dbReference type="HOGENOM" id="CLU_006373_1_0_1"/>
<dbReference type="InParanoid" id="Q6ZQ89"/>
<dbReference type="OMA" id="WLHYSLV"/>
<dbReference type="OrthoDB" id="1108038at2759"/>
<dbReference type="PhylomeDB" id="Q6ZQ89"/>
<dbReference type="TreeFam" id="TF105777"/>
<dbReference type="UniPathway" id="UPA00143"/>
<dbReference type="BioGRID-ORCS" id="223455">
    <property type="hits" value="2 hits in 48 CRISPR screens"/>
</dbReference>
<dbReference type="ChiTaRS" id="March6">
    <property type="organism name" value="mouse"/>
</dbReference>
<dbReference type="PRO" id="PR:Q6ZQ89"/>
<dbReference type="Proteomes" id="UP000000589">
    <property type="component" value="Chromosome 15"/>
</dbReference>
<dbReference type="RNAct" id="Q6ZQ89">
    <property type="molecule type" value="protein"/>
</dbReference>
<dbReference type="Bgee" id="ENSMUSG00000039100">
    <property type="expression patterns" value="Expressed in extensor digitorum longus and 259 other cell types or tissues"/>
</dbReference>
<dbReference type="GO" id="GO:0005789">
    <property type="term" value="C:endoplasmic reticulum membrane"/>
    <property type="evidence" value="ECO:0000250"/>
    <property type="project" value="UniProtKB"/>
</dbReference>
<dbReference type="GO" id="GO:0031624">
    <property type="term" value="F:ubiquitin conjugating enzyme binding"/>
    <property type="evidence" value="ECO:0007669"/>
    <property type="project" value="Ensembl"/>
</dbReference>
<dbReference type="GO" id="GO:0061630">
    <property type="term" value="F:ubiquitin protein ligase activity"/>
    <property type="evidence" value="ECO:0000250"/>
    <property type="project" value="UniProtKB"/>
</dbReference>
<dbReference type="GO" id="GO:1990381">
    <property type="term" value="F:ubiquitin-specific protease binding"/>
    <property type="evidence" value="ECO:0007669"/>
    <property type="project" value="Ensembl"/>
</dbReference>
<dbReference type="GO" id="GO:0008270">
    <property type="term" value="F:zinc ion binding"/>
    <property type="evidence" value="ECO:0007669"/>
    <property type="project" value="UniProtKB-KW"/>
</dbReference>
<dbReference type="GO" id="GO:0043161">
    <property type="term" value="P:proteasome-mediated ubiquitin-dependent protein catabolic process"/>
    <property type="evidence" value="ECO:0000250"/>
    <property type="project" value="UniProtKB"/>
</dbReference>
<dbReference type="GO" id="GO:0070936">
    <property type="term" value="P:protein K48-linked ubiquitination"/>
    <property type="evidence" value="ECO:0000250"/>
    <property type="project" value="UniProtKB"/>
</dbReference>
<dbReference type="GO" id="GO:0016567">
    <property type="term" value="P:protein ubiquitination"/>
    <property type="evidence" value="ECO:0000250"/>
    <property type="project" value="UniProtKB"/>
</dbReference>
<dbReference type="CDD" id="cd16702">
    <property type="entry name" value="RING_CH-C4HC3_MARCH6"/>
    <property type="match status" value="1"/>
</dbReference>
<dbReference type="FunFam" id="3.30.40.10:FF:000096">
    <property type="entry name" value="E3 ubiquitin-protein ligase MARCH6"/>
    <property type="match status" value="1"/>
</dbReference>
<dbReference type="Gene3D" id="3.30.40.10">
    <property type="entry name" value="Zinc/RING finger domain, C3HC4 (zinc finger)"/>
    <property type="match status" value="1"/>
</dbReference>
<dbReference type="InterPro" id="IPR056521">
    <property type="entry name" value="MARCHF6-like_C"/>
</dbReference>
<dbReference type="InterPro" id="IPR011016">
    <property type="entry name" value="Znf_RING-CH"/>
</dbReference>
<dbReference type="InterPro" id="IPR013083">
    <property type="entry name" value="Znf_RING/FYVE/PHD"/>
</dbReference>
<dbReference type="PANTHER" id="PTHR13145:SF0">
    <property type="entry name" value="E3 UBIQUITIN-PROTEIN LIGASE MARCHF6"/>
    <property type="match status" value="1"/>
</dbReference>
<dbReference type="PANTHER" id="PTHR13145">
    <property type="entry name" value="SSM4 PROTEIN"/>
    <property type="match status" value="1"/>
</dbReference>
<dbReference type="Pfam" id="PF23113">
    <property type="entry name" value="MARCHF6_C"/>
    <property type="match status" value="1"/>
</dbReference>
<dbReference type="Pfam" id="PF12906">
    <property type="entry name" value="RINGv"/>
    <property type="match status" value="1"/>
</dbReference>
<dbReference type="SMART" id="SM00744">
    <property type="entry name" value="RINGv"/>
    <property type="match status" value="1"/>
</dbReference>
<dbReference type="SUPFAM" id="SSF57850">
    <property type="entry name" value="RING/U-box"/>
    <property type="match status" value="1"/>
</dbReference>
<dbReference type="PROSITE" id="PS51292">
    <property type="entry name" value="ZF_RING_CH"/>
    <property type="match status" value="1"/>
</dbReference>
<sequence>MDTAEEDICRVCRSEGTPEKPLYHPCVCTGSIKFIHQECLVQWLKHSRKEYCELCKHRFAFTPIYSPDMPSRLPIQDIFAGLVTSIGTAIRYWFHYTLVAFAWLGVVPLTACRIYKCLFTGSVSSLLTLPLDMLSTENLLADCLQGCFVVTCTLCAFISLVWLREQIVHGGAPIWLEHAAPPFNAAGHHQNEAPVGGNGAENPAADQPANPAGENAVLGENPDAQDGQAEEEEEDNEEEDDAGVEDAADANNGAQDDMNWNALEWDRAAEELTWERMLGLDGSLVFLEHVFWVVSLNTLFILVFAFCPYHIGHFSLVGLGFEEHVQASHFEGLITTIVGYILLAITLIICHALATLVKFHRSRRLLGVCYIVVKVSLLVVVEIGVFPLICGWWLDICSLEMFDATLKDRELSFQSAPGTTMFLHWLVGMVYVFYFASFILLLREVLRPGVLWFLRNLNDPDFNPVQEMIHLPIYRHLRRFILSVIVFGSIVLLMLWLPIRIIKSLLPNFLPYNVMLYSDAPVSELSLELLLLQVVLPALLEQGHTRQWLKGLVRAWTVTAGYLLDLHSYLLGDQEENENSANQQVNNNQPARNNNAVPAGEGLHAAHQAILQQGGPVGFQPYRRPLNFPLRIFLLIVFMCITLLIASLICLTLPVFAGRWLMSFWTGTAKIHELYTAACGLYVCWLTIRAVTVLVAWMPQGRRVIFQKVKEWSLMIMKTLIVAVLLAGVVPLLLGLLFELVIVAPLRVPLDQTPLFYPWQDWALGVLHAKIIAAITLMGPQWWLKTVIEQVYANGIRNIDLHYIIRKLAAPVISVLLLSLCVPYVIASGAVPLLGVTAEMQNLVHRRIYPFLLMVVVLMGILSFQVRQFKRLYEHIKNDKYLVGQRLVNYERKSGKQGPSTPPPVSSQE</sequence>
<accession>Q6ZQ89</accession>
<accession>Q6PCS1</accession>
<accession>Q80V02</accession>
<accession>Q80VC7</accession>
<accession>Q8BJA0</accession>
<accession>Q8BXX6</accession>
<protein>
    <recommendedName>
        <fullName>E3 ubiquitin-protein ligase MARCHF6</fullName>
        <ecNumber evidence="1">2.3.2.27</ecNumber>
    </recommendedName>
    <alternativeName>
        <fullName>Membrane-associated RING finger protein 6</fullName>
    </alternativeName>
    <alternativeName>
        <fullName>Membrane-associated RING-CH protein VI</fullName>
        <shortName>MARCH-VI</shortName>
    </alternativeName>
    <alternativeName>
        <fullName evidence="9">RING-type E3 ubiquitin transferase MARCHF6</fullName>
    </alternativeName>
</protein>
<comment type="function">
    <text evidence="1">Endoplasmic reticulum membrane-associated E3 ubiquitin ligase that plays a critical role in mitigating endoplasmic reticulum stress, the regulation of cholesterol and lipid homeostasis, and ferroptosis. Acts as a pivotal component of both the Ac/N-degron pathway (targeting the N-terminal acetyl group of substrates) and the ER-associated protein degradation-cytosol (ERAD-C) pathway (targeting misfolded substrates). For instance, mediates the degradation of Ac/N-degron-bearing proteins such as the G-protein regulator RGS2 and the lipid droplet protein PLIN2 (By similarity). Suppresses endoplasmic reticulum stress and ferroptosis through cytosolic POMC degradation (By similarity). Prevents ferroptosis by acting as a NADPH sensor during lipid peroxidation through its C-terminal regulatory region. Facilitates also the degradation of selected endoplasmic reticulum proteins by associating with signal peptide peptidase for the turnover of endogenous tail-anchored proteins. Promotes ubiquitination of DIO2, leading to its degradation. By ubiquitinating and thereby modulating the stability of many proteins of the cholesterol pathway including SQLE, CYP51A1, CYP11A1 and HMGCR, acts as a crucial post-translational regulator of cholesterol synthesis (By similarity).</text>
</comment>
<comment type="catalytic activity">
    <reaction evidence="1">
        <text>S-ubiquitinyl-[E2 ubiquitin-conjugating enzyme]-L-cysteine + [acceptor protein]-L-lysine = [E2 ubiquitin-conjugating enzyme]-L-cysteine + N(6)-ubiquitinyl-[acceptor protein]-L-lysine.</text>
        <dbReference type="EC" id="2.3.2.27"/>
    </reaction>
</comment>
<comment type="pathway">
    <text evidence="1">Protein modification; protein ubiquitination.</text>
</comment>
<comment type="subunit">
    <text evidence="1">Interacts with DIO2. Interacts with SQLE.</text>
</comment>
<comment type="subcellular location">
    <subcellularLocation>
        <location evidence="1">Endoplasmic reticulum membrane</location>
        <topology evidence="1">Multi-pass membrane protein</topology>
    </subcellularLocation>
</comment>
<comment type="alternative products">
    <event type="alternative splicing"/>
    <isoform>
        <id>Q6ZQ89-1</id>
        <name>1</name>
        <sequence type="displayed"/>
    </isoform>
    <isoform>
        <id>Q6ZQ89-2</id>
        <name>2</name>
        <sequence type="described" ref="VSP_022702 VSP_022703"/>
    </isoform>
    <isoform>
        <id>Q6ZQ89-3</id>
        <name>3</name>
        <sequence type="described" ref="VSP_022704"/>
    </isoform>
</comment>
<comment type="domain">
    <text evidence="1">The RING-CH-type zinc finger domain is required for E3 ligase activity.</text>
</comment>
<comment type="PTM">
    <text evidence="1">Auto-ubiquitinated, which results in proteasomal degradation. Deubiquitinated by USP19; protecting MARCHF6 from p97-mediated proteasomal degradation.</text>
</comment>
<comment type="disruption phenotype">
    <text evidence="5 6">Marchf6-deletion mice are born at rates much lower than Mendelian frequencies, with peri-natal deaths commonly occurring. Mice that survive early perinatal mortality exhibit growth retardation and/or postnatal lethality (PubMed:35941365). POMC-Cre-mediated Marchf6-deficient mice exhibit hyperphagia, reduced energy expenditure, and weight gain (PubMed:37421621).</text>
</comment>
<comment type="similarity">
    <text evidence="9">Belongs to the DOA10/MARCHF6 family.</text>
</comment>
<comment type="sequence caution" evidence="9">
    <conflict type="erroneous initiation">
        <sequence resource="EMBL-CDS" id="AAH37454"/>
    </conflict>
    <text>Extended N-terminus.</text>
</comment>
<keyword id="KW-0007">Acetylation</keyword>
<keyword id="KW-0025">Alternative splicing</keyword>
<keyword id="KW-0256">Endoplasmic reticulum</keyword>
<keyword id="KW-0472">Membrane</keyword>
<keyword id="KW-0479">Metal-binding</keyword>
<keyword id="KW-1185">Reference proteome</keyword>
<keyword id="KW-0808">Transferase</keyword>
<keyword id="KW-0812">Transmembrane</keyword>
<keyword id="KW-1133">Transmembrane helix</keyword>
<keyword id="KW-0832">Ubl conjugation</keyword>
<keyword id="KW-0833">Ubl conjugation pathway</keyword>
<keyword id="KW-0862">Zinc</keyword>
<keyword id="KW-0863">Zinc-finger</keyword>
<evidence type="ECO:0000250" key="1">
    <source>
        <dbReference type="UniProtKB" id="O60337"/>
    </source>
</evidence>
<evidence type="ECO:0000255" key="2"/>
<evidence type="ECO:0000255" key="3">
    <source>
        <dbReference type="PROSITE-ProRule" id="PRU00623"/>
    </source>
</evidence>
<evidence type="ECO:0000256" key="4">
    <source>
        <dbReference type="SAM" id="MobiDB-lite"/>
    </source>
</evidence>
<evidence type="ECO:0000269" key="5">
    <source>
    </source>
</evidence>
<evidence type="ECO:0000269" key="6">
    <source>
    </source>
</evidence>
<evidence type="ECO:0000303" key="7">
    <source>
    </source>
</evidence>
<evidence type="ECO:0000303" key="8">
    <source>
    </source>
</evidence>
<evidence type="ECO:0000305" key="9"/>
<proteinExistence type="evidence at transcript level"/>
<name>MARH6_MOUSE</name>
<reference key="1">
    <citation type="journal article" date="2005" name="Science">
        <title>The transcriptional landscape of the mammalian genome.</title>
        <authorList>
            <person name="Carninci P."/>
            <person name="Kasukawa T."/>
            <person name="Katayama S."/>
            <person name="Gough J."/>
            <person name="Frith M.C."/>
            <person name="Maeda N."/>
            <person name="Oyama R."/>
            <person name="Ravasi T."/>
            <person name="Lenhard B."/>
            <person name="Wells C."/>
            <person name="Kodzius R."/>
            <person name="Shimokawa K."/>
            <person name="Bajic V.B."/>
            <person name="Brenner S.E."/>
            <person name="Batalov S."/>
            <person name="Forrest A.R."/>
            <person name="Zavolan M."/>
            <person name="Davis M.J."/>
            <person name="Wilming L.G."/>
            <person name="Aidinis V."/>
            <person name="Allen J.E."/>
            <person name="Ambesi-Impiombato A."/>
            <person name="Apweiler R."/>
            <person name="Aturaliya R.N."/>
            <person name="Bailey T.L."/>
            <person name="Bansal M."/>
            <person name="Baxter L."/>
            <person name="Beisel K.W."/>
            <person name="Bersano T."/>
            <person name="Bono H."/>
            <person name="Chalk A.M."/>
            <person name="Chiu K.P."/>
            <person name="Choudhary V."/>
            <person name="Christoffels A."/>
            <person name="Clutterbuck D.R."/>
            <person name="Crowe M.L."/>
            <person name="Dalla E."/>
            <person name="Dalrymple B.P."/>
            <person name="de Bono B."/>
            <person name="Della Gatta G."/>
            <person name="di Bernardo D."/>
            <person name="Down T."/>
            <person name="Engstrom P."/>
            <person name="Fagiolini M."/>
            <person name="Faulkner G."/>
            <person name="Fletcher C.F."/>
            <person name="Fukushima T."/>
            <person name="Furuno M."/>
            <person name="Futaki S."/>
            <person name="Gariboldi M."/>
            <person name="Georgii-Hemming P."/>
            <person name="Gingeras T.R."/>
            <person name="Gojobori T."/>
            <person name="Green R.E."/>
            <person name="Gustincich S."/>
            <person name="Harbers M."/>
            <person name="Hayashi Y."/>
            <person name="Hensch T.K."/>
            <person name="Hirokawa N."/>
            <person name="Hill D."/>
            <person name="Huminiecki L."/>
            <person name="Iacono M."/>
            <person name="Ikeo K."/>
            <person name="Iwama A."/>
            <person name="Ishikawa T."/>
            <person name="Jakt M."/>
            <person name="Kanapin A."/>
            <person name="Katoh M."/>
            <person name="Kawasawa Y."/>
            <person name="Kelso J."/>
            <person name="Kitamura H."/>
            <person name="Kitano H."/>
            <person name="Kollias G."/>
            <person name="Krishnan S.P."/>
            <person name="Kruger A."/>
            <person name="Kummerfeld S.K."/>
            <person name="Kurochkin I.V."/>
            <person name="Lareau L.F."/>
            <person name="Lazarevic D."/>
            <person name="Lipovich L."/>
            <person name="Liu J."/>
            <person name="Liuni S."/>
            <person name="McWilliam S."/>
            <person name="Madan Babu M."/>
            <person name="Madera M."/>
            <person name="Marchionni L."/>
            <person name="Matsuda H."/>
            <person name="Matsuzawa S."/>
            <person name="Miki H."/>
            <person name="Mignone F."/>
            <person name="Miyake S."/>
            <person name="Morris K."/>
            <person name="Mottagui-Tabar S."/>
            <person name="Mulder N."/>
            <person name="Nakano N."/>
            <person name="Nakauchi H."/>
            <person name="Ng P."/>
            <person name="Nilsson R."/>
            <person name="Nishiguchi S."/>
            <person name="Nishikawa S."/>
            <person name="Nori F."/>
            <person name="Ohara O."/>
            <person name="Okazaki Y."/>
            <person name="Orlando V."/>
            <person name="Pang K.C."/>
            <person name="Pavan W.J."/>
            <person name="Pavesi G."/>
            <person name="Pesole G."/>
            <person name="Petrovsky N."/>
            <person name="Piazza S."/>
            <person name="Reed J."/>
            <person name="Reid J.F."/>
            <person name="Ring B.Z."/>
            <person name="Ringwald M."/>
            <person name="Rost B."/>
            <person name="Ruan Y."/>
            <person name="Salzberg S.L."/>
            <person name="Sandelin A."/>
            <person name="Schneider C."/>
            <person name="Schoenbach C."/>
            <person name="Sekiguchi K."/>
            <person name="Semple C.A."/>
            <person name="Seno S."/>
            <person name="Sessa L."/>
            <person name="Sheng Y."/>
            <person name="Shibata Y."/>
            <person name="Shimada H."/>
            <person name="Shimada K."/>
            <person name="Silva D."/>
            <person name="Sinclair B."/>
            <person name="Sperling S."/>
            <person name="Stupka E."/>
            <person name="Sugiura K."/>
            <person name="Sultana R."/>
            <person name="Takenaka Y."/>
            <person name="Taki K."/>
            <person name="Tammoja K."/>
            <person name="Tan S.L."/>
            <person name="Tang S."/>
            <person name="Taylor M.S."/>
            <person name="Tegner J."/>
            <person name="Teichmann S.A."/>
            <person name="Ueda H.R."/>
            <person name="van Nimwegen E."/>
            <person name="Verardo R."/>
            <person name="Wei C.L."/>
            <person name="Yagi K."/>
            <person name="Yamanishi H."/>
            <person name="Zabarovsky E."/>
            <person name="Zhu S."/>
            <person name="Zimmer A."/>
            <person name="Hide W."/>
            <person name="Bult C."/>
            <person name="Grimmond S.M."/>
            <person name="Teasdale R.D."/>
            <person name="Liu E.T."/>
            <person name="Brusic V."/>
            <person name="Quackenbush J."/>
            <person name="Wahlestedt C."/>
            <person name="Mattick J.S."/>
            <person name="Hume D.A."/>
            <person name="Kai C."/>
            <person name="Sasaki D."/>
            <person name="Tomaru Y."/>
            <person name="Fukuda S."/>
            <person name="Kanamori-Katayama M."/>
            <person name="Suzuki M."/>
            <person name="Aoki J."/>
            <person name="Arakawa T."/>
            <person name="Iida J."/>
            <person name="Imamura K."/>
            <person name="Itoh M."/>
            <person name="Kato T."/>
            <person name="Kawaji H."/>
            <person name="Kawagashira N."/>
            <person name="Kawashima T."/>
            <person name="Kojima M."/>
            <person name="Kondo S."/>
            <person name="Konno H."/>
            <person name="Nakano K."/>
            <person name="Ninomiya N."/>
            <person name="Nishio T."/>
            <person name="Okada M."/>
            <person name="Plessy C."/>
            <person name="Shibata K."/>
            <person name="Shiraki T."/>
            <person name="Suzuki S."/>
            <person name="Tagami M."/>
            <person name="Waki K."/>
            <person name="Watahiki A."/>
            <person name="Okamura-Oho Y."/>
            <person name="Suzuki H."/>
            <person name="Kawai J."/>
            <person name="Hayashizaki Y."/>
        </authorList>
    </citation>
    <scope>NUCLEOTIDE SEQUENCE [LARGE SCALE MRNA] (ISOFORM 2)</scope>
    <scope>NUCLEOTIDE SEQUENCE [LARGE SCALE MRNA] OF 476-909 (ISOFORM 1)</scope>
    <source>
        <strain>C57BL/6J</strain>
        <strain>NOD</strain>
        <tissue>Cerebellum</tissue>
        <tissue>Spleen</tissue>
    </source>
</reference>
<reference key="2">
    <citation type="journal article" date="2003" name="DNA Res.">
        <title>Prediction of the coding sequences of mouse homologues of KIAA gene: III. The complete nucleotide sequences of 500 mouse KIAA-homologous cDNAs identified by screening of terminal sequences of cDNA clones randomly sampled from size-fractionated libraries.</title>
        <authorList>
            <person name="Okazaki N."/>
            <person name="Kikuno R."/>
            <person name="Ohara R."/>
            <person name="Inamoto S."/>
            <person name="Koseki H."/>
            <person name="Hiraoka S."/>
            <person name="Saga Y."/>
            <person name="Nagase T."/>
            <person name="Ohara O."/>
            <person name="Koga H."/>
        </authorList>
    </citation>
    <scope>NUCLEOTIDE SEQUENCE [LARGE SCALE MRNA] OF 348-883 (ISOFORM 3)</scope>
    <source>
        <tissue>Brain</tissue>
    </source>
</reference>
<reference key="3">
    <citation type="journal article" date="2004" name="Genome Res.">
        <title>The status, quality, and expansion of the NIH full-length cDNA project: the Mammalian Gene Collection (MGC).</title>
        <authorList>
            <consortium name="The MGC Project Team"/>
        </authorList>
    </citation>
    <scope>NUCLEOTIDE SEQUENCE [LARGE SCALE MRNA] OF 383-909 (ISOFORM 1)</scope>
    <source>
        <strain>Czech II</strain>
        <strain>FVB/N</strain>
        <tissue>Mammary gland</tissue>
    </source>
</reference>
<reference key="4">
    <citation type="journal article" date="2022" name="Nat. Cell Biol.">
        <title>The MARCHF6 E3 ubiquitin ligase acts as an NADPH sensor for the regulation of ferroptosis.</title>
        <authorList>
            <person name="Nguyen K.T."/>
            <person name="Mun S.H."/>
            <person name="Yang J."/>
            <person name="Lee J."/>
            <person name="Seok O.H."/>
            <person name="Kim E."/>
            <person name="Kim D."/>
            <person name="An S.Y."/>
            <person name="Seo D.Y."/>
            <person name="Suh J.Y."/>
            <person name="Lee Y."/>
            <person name="Hwang C.S."/>
        </authorList>
    </citation>
    <scope>FUNCTION</scope>
    <scope>DISRUPTION PHENOTYPE</scope>
</reference>
<reference key="5">
    <citation type="journal article" date="2023" name="Cell Rep.">
        <title>Marchf6 E3 ubiquitin ligase critically regulates endoplasmic reticulum stress, ferroptosis, and metabolic homeostasis in POMC neurons.</title>
        <authorList>
            <person name="Mun S.H."/>
            <person name="Lee C.S."/>
            <person name="Kim H.J."/>
            <person name="Kim J."/>
            <person name="Lee H."/>
            <person name="Yang J."/>
            <person name="Im S.H."/>
            <person name="Kim J.H."/>
            <person name="Seong J.K."/>
            <person name="Hwang C.S."/>
        </authorList>
    </citation>
    <scope>FUNCTION</scope>
    <scope>DISRUPTION PHENOTYPE</scope>
</reference>
<feature type="chain" id="PRO_0000274299" description="E3 ubiquitin-protein ligase MARCHF6">
    <location>
        <begin position="1"/>
        <end position="909"/>
    </location>
</feature>
<feature type="topological domain" description="Cytoplasmic" evidence="1">
    <location>
        <begin position="1"/>
        <end position="91"/>
    </location>
</feature>
<feature type="transmembrane region" description="Helical" evidence="2">
    <location>
        <begin position="92"/>
        <end position="112"/>
    </location>
</feature>
<feature type="topological domain" description="Extracellular" evidence="2">
    <location>
        <begin position="113"/>
        <end position="142"/>
    </location>
</feature>
<feature type="transmembrane region" description="Helical" evidence="2">
    <location>
        <begin position="143"/>
        <end position="163"/>
    </location>
</feature>
<feature type="topological domain" description="Cytoplasmic" evidence="2">
    <location>
        <begin position="164"/>
        <end position="283"/>
    </location>
</feature>
<feature type="transmembrane region" description="Helical" evidence="2">
    <location>
        <begin position="284"/>
        <end position="304"/>
    </location>
</feature>
<feature type="topological domain" description="Extracellular" evidence="2">
    <location>
        <begin position="305"/>
        <end position="336"/>
    </location>
</feature>
<feature type="transmembrane region" description="Helical" evidence="2">
    <location>
        <begin position="337"/>
        <end position="357"/>
    </location>
</feature>
<feature type="topological domain" description="Cytoplasmic" evidence="2">
    <location>
        <begin position="358"/>
        <end position="376"/>
    </location>
</feature>
<feature type="transmembrane region" description="Helical" evidence="2">
    <location>
        <begin position="377"/>
        <end position="397"/>
    </location>
</feature>
<feature type="topological domain" description="Extracellular" evidence="2">
    <location>
        <begin position="398"/>
        <end position="421"/>
    </location>
</feature>
<feature type="transmembrane region" description="Helical" evidence="2">
    <location>
        <begin position="422"/>
        <end position="442"/>
    </location>
</feature>
<feature type="topological domain" description="Cytoplasmic" evidence="2">
    <location>
        <begin position="443"/>
        <end position="480"/>
    </location>
</feature>
<feature type="transmembrane region" description="Helical" evidence="2">
    <location>
        <begin position="481"/>
        <end position="501"/>
    </location>
</feature>
<feature type="topological domain" description="Extracellular" evidence="2">
    <location>
        <begin position="502"/>
        <end position="519"/>
    </location>
</feature>
<feature type="transmembrane region" description="Helical" evidence="2">
    <location>
        <begin position="520"/>
        <end position="540"/>
    </location>
</feature>
<feature type="topological domain" description="Cytoplasmic" evidence="2">
    <location>
        <begin position="541"/>
        <end position="631"/>
    </location>
</feature>
<feature type="transmembrane region" description="Helical" evidence="2">
    <location>
        <begin position="632"/>
        <end position="652"/>
    </location>
</feature>
<feature type="topological domain" description="Extracellular" evidence="2">
    <location>
        <begin position="653"/>
        <end position="677"/>
    </location>
</feature>
<feature type="transmembrane region" description="Helical" evidence="2">
    <location>
        <begin position="678"/>
        <end position="698"/>
    </location>
</feature>
<feature type="topological domain" description="Cytoplasmic" evidence="2">
    <location>
        <begin position="699"/>
        <end position="720"/>
    </location>
</feature>
<feature type="transmembrane region" description="Helical" evidence="2">
    <location>
        <begin position="721"/>
        <end position="741"/>
    </location>
</feature>
<feature type="topological domain" description="Extracellular" evidence="2">
    <location>
        <begin position="742"/>
        <end position="763"/>
    </location>
</feature>
<feature type="transmembrane region" description="Helical" evidence="2">
    <location>
        <begin position="764"/>
        <end position="784"/>
    </location>
</feature>
<feature type="topological domain" description="Cytoplasmic" evidence="2">
    <location>
        <begin position="785"/>
        <end position="814"/>
    </location>
</feature>
<feature type="transmembrane region" description="Helical" evidence="2">
    <location>
        <begin position="815"/>
        <end position="835"/>
    </location>
</feature>
<feature type="topological domain" description="Extracellular" evidence="2">
    <location>
        <begin position="836"/>
        <end position="847"/>
    </location>
</feature>
<feature type="transmembrane region" description="Helical" evidence="2">
    <location>
        <begin position="848"/>
        <end position="868"/>
    </location>
</feature>
<feature type="topological domain" description="Cytoplasmic" evidence="1">
    <location>
        <begin position="869"/>
        <end position="909"/>
    </location>
</feature>
<feature type="zinc finger region" description="RING-CH-type" evidence="3">
    <location>
        <begin position="1"/>
        <end position="62"/>
    </location>
</feature>
<feature type="region of interest" description="Disordered" evidence="4">
    <location>
        <begin position="186"/>
        <end position="256"/>
    </location>
</feature>
<feature type="compositionally biased region" description="Acidic residues" evidence="4">
    <location>
        <begin position="228"/>
        <end position="248"/>
    </location>
</feature>
<feature type="binding site" evidence="3">
    <location>
        <position position="9"/>
    </location>
    <ligand>
        <name>Zn(2+)</name>
        <dbReference type="ChEBI" id="CHEBI:29105"/>
        <label>1</label>
    </ligand>
</feature>
<feature type="binding site" evidence="3">
    <location>
        <position position="12"/>
    </location>
    <ligand>
        <name>Zn(2+)</name>
        <dbReference type="ChEBI" id="CHEBI:29105"/>
        <label>1</label>
    </ligand>
</feature>
<feature type="binding site" evidence="3">
    <location>
        <position position="26"/>
    </location>
    <ligand>
        <name>Zn(2+)</name>
        <dbReference type="ChEBI" id="CHEBI:29105"/>
        <label>2</label>
    </ligand>
</feature>
<feature type="binding site" evidence="3">
    <location>
        <position position="28"/>
    </location>
    <ligand>
        <name>Zn(2+)</name>
        <dbReference type="ChEBI" id="CHEBI:29105"/>
        <label>2</label>
    </ligand>
</feature>
<feature type="binding site" evidence="3">
    <location>
        <position position="36"/>
    </location>
    <ligand>
        <name>Zn(2+)</name>
        <dbReference type="ChEBI" id="CHEBI:29105"/>
        <label>1</label>
    </ligand>
</feature>
<feature type="binding site" evidence="3">
    <location>
        <position position="39"/>
    </location>
    <ligand>
        <name>Zn(2+)</name>
        <dbReference type="ChEBI" id="CHEBI:29105"/>
        <label>1</label>
    </ligand>
</feature>
<feature type="binding site" evidence="3">
    <location>
        <position position="52"/>
    </location>
    <ligand>
        <name>Zn(2+)</name>
        <dbReference type="ChEBI" id="CHEBI:29105"/>
        <label>2</label>
    </ligand>
</feature>
<feature type="binding site" evidence="3">
    <location>
        <position position="55"/>
    </location>
    <ligand>
        <name>Zn(2+)</name>
        <dbReference type="ChEBI" id="CHEBI:29105"/>
        <label>2</label>
    </ligand>
</feature>
<feature type="modified residue" description="N-acetylmethionine" evidence="1">
    <location>
        <position position="1"/>
    </location>
</feature>
<feature type="splice variant" id="VSP_022702" description="In isoform 2." evidence="8">
    <original>PLNFPLRIFLLIVFMCITLLIASLICLTLPVFAGRWLMSFWTGTAKIHELYTAACGLYVCWLTIRAVTVLVAWMPQGRRVIFQKVKEWSLMIMKTLIVAVLLAGVVPLLLGLLFELVIVAPLRVPLDQTPLFYPWQDWALGVLHAKIIAAITLMGPQWWLKTVIEQVYANGIRNIDLHYIIRKLAAPVISVLLLSLC</original>
    <variation>LPRWAPSHWQGLLSCVLCPVAFRKMMSSWGFIVHNIC</variation>
    <location>
        <begin position="625"/>
        <end position="821"/>
    </location>
</feature>
<feature type="splice variant" id="VSP_022704" description="In isoform 3." evidence="7">
    <location>
        <begin position="683"/>
        <end position="708"/>
    </location>
</feature>
<feature type="splice variant" id="VSP_022703" description="In isoform 2." evidence="8">
    <location>
        <begin position="822"/>
        <end position="909"/>
    </location>
</feature>
<feature type="sequence conflict" description="In Ref. 1; BAC31427." evidence="9" ref="1">
    <original>H</original>
    <variation>N</variation>
    <location>
        <position position="476"/>
    </location>
</feature>
<organism>
    <name type="scientific">Mus musculus</name>
    <name type="common">Mouse</name>
    <dbReference type="NCBI Taxonomy" id="10090"/>
    <lineage>
        <taxon>Eukaryota</taxon>
        <taxon>Metazoa</taxon>
        <taxon>Chordata</taxon>
        <taxon>Craniata</taxon>
        <taxon>Vertebrata</taxon>
        <taxon>Euteleostomi</taxon>
        <taxon>Mammalia</taxon>
        <taxon>Eutheria</taxon>
        <taxon>Euarchontoglires</taxon>
        <taxon>Glires</taxon>
        <taxon>Rodentia</taxon>
        <taxon>Myomorpha</taxon>
        <taxon>Muroidea</taxon>
        <taxon>Muridae</taxon>
        <taxon>Murinae</taxon>
        <taxon>Mus</taxon>
        <taxon>Mus</taxon>
    </lineage>
</organism>